<name>LYTS_STAA3</name>
<feature type="chain" id="PRO_0000292215" description="Sensor histidine kinase/phosphatase LytS">
    <location>
        <begin position="1"/>
        <end position="584"/>
    </location>
</feature>
<feature type="transmembrane region" description="Helical" evidence="3">
    <location>
        <begin position="2"/>
        <end position="22"/>
    </location>
</feature>
<feature type="transmembrane region" description="Helical" evidence="3">
    <location>
        <begin position="42"/>
        <end position="62"/>
    </location>
</feature>
<feature type="transmembrane region" description="Helical" evidence="3">
    <location>
        <begin position="92"/>
        <end position="112"/>
    </location>
</feature>
<feature type="transmembrane region" description="Helical" evidence="3">
    <location>
        <begin position="121"/>
        <end position="141"/>
    </location>
</feature>
<feature type="transmembrane region" description="Helical" evidence="3">
    <location>
        <begin position="154"/>
        <end position="174"/>
    </location>
</feature>
<feature type="transmembrane region" description="Helical" evidence="3">
    <location>
        <begin position="186"/>
        <end position="206"/>
    </location>
</feature>
<feature type="domain" description="GAF">
    <location>
        <begin position="311"/>
        <end position="363"/>
    </location>
</feature>
<feature type="domain" description="Histidine kinase">
    <location>
        <begin position="379"/>
        <end position="461"/>
    </location>
</feature>
<feature type="modified residue" description="Phosphohistidine; by autocatalysis" evidence="1">
    <location>
        <position position="390"/>
    </location>
</feature>
<reference key="1">
    <citation type="journal article" date="2006" name="Lancet">
        <title>Complete genome sequence of USA300, an epidemic clone of community-acquired meticillin-resistant Staphylococcus aureus.</title>
        <authorList>
            <person name="Diep B.A."/>
            <person name="Gill S.R."/>
            <person name="Chang R.F."/>
            <person name="Phan T.H."/>
            <person name="Chen J.H."/>
            <person name="Davidson M.G."/>
            <person name="Lin F."/>
            <person name="Lin J."/>
            <person name="Carleton H.A."/>
            <person name="Mongodin E.F."/>
            <person name="Sensabaugh G.F."/>
            <person name="Perdreau-Remington F."/>
        </authorList>
    </citation>
    <scope>NUCLEOTIDE SEQUENCE [LARGE SCALE GENOMIC DNA]</scope>
    <source>
        <strain>USA300</strain>
    </source>
</reference>
<sequence length="584" mass="65029">MLSLTMLLLERVGLIIILAYVLMNIPYFKNLMNRRRTWKARWQLCIIFSLFALMSNLTGIVIDHQHSLSGSVYFRLDDDVSLANTRVLTIGVAGLVGGPFVGLFVGVISGIFRVYMGGADAQVYLISSIFIGIIAGYFGLQAQRRKRYPSIAKSAMIGIVMEMIQMLSILTFSHDKAYAVDLISLIALPMIIVNSVGTAIFMSIIISTLKQEEQMKAVQTHDVLQLMNQTLPYFKEGLNRESAQQIAMIIKNLMKVSAVAITSKNEILSHVGAGSDHHIPTNEILTSLSKDVLKSGKLKEVHTKEEIGCSHPNCPLRAAIVIPLEMHGSIVGTLKMYFTNPNDLTFVERQLAEGLANIFSSQIELGEAETQSKLLKDAEIKSLQAQVSPHFFFNSINTISALVRINSEKARELLLELSYFFRANLQGSKQHTITLDKELSQVRAYLSLEQARYPGRFNININVEDKYRDVLVPPFLIQILVENAIKHAFTNRKQGNDIDVSVIKETATHVRIIVQDNGQGISKDKMHLLGETSVESESGTGSALENLNLRLKGLFGKSAALQFESTSSGTTFWCVLPYERQEEE</sequence>
<accession>Q2FK10</accession>
<proteinExistence type="inferred from homology"/>
<protein>
    <recommendedName>
        <fullName>Sensor histidine kinase/phosphatase LytS</fullName>
        <ecNumber evidence="2">2.7.13.3</ecNumber>
        <ecNumber evidence="2">3.1.3.-</ecNumber>
    </recommendedName>
    <alternativeName>
        <fullName>Autolysin sensor kinase</fullName>
    </alternativeName>
</protein>
<dbReference type="EC" id="2.7.13.3" evidence="2"/>
<dbReference type="EC" id="3.1.3.-" evidence="2"/>
<dbReference type="EMBL" id="CP000255">
    <property type="protein sequence ID" value="ABD21266.1"/>
    <property type="status" value="ALT_INIT"/>
    <property type="molecule type" value="Genomic_DNA"/>
</dbReference>
<dbReference type="RefSeq" id="WP_000950281.1">
    <property type="nucleotide sequence ID" value="NZ_CP027476.1"/>
</dbReference>
<dbReference type="SMR" id="Q2FK10"/>
<dbReference type="KEGG" id="saa:SAUSA300_0254"/>
<dbReference type="HOGENOM" id="CLU_020473_3_3_9"/>
<dbReference type="OMA" id="SHFFRSN"/>
<dbReference type="Proteomes" id="UP000001939">
    <property type="component" value="Chromosome"/>
</dbReference>
<dbReference type="GO" id="GO:0005886">
    <property type="term" value="C:plasma membrane"/>
    <property type="evidence" value="ECO:0007669"/>
    <property type="project" value="UniProtKB-SubCell"/>
</dbReference>
<dbReference type="GO" id="GO:0005524">
    <property type="term" value="F:ATP binding"/>
    <property type="evidence" value="ECO:0007669"/>
    <property type="project" value="UniProtKB-KW"/>
</dbReference>
<dbReference type="GO" id="GO:0016787">
    <property type="term" value="F:hydrolase activity"/>
    <property type="evidence" value="ECO:0007669"/>
    <property type="project" value="UniProtKB-KW"/>
</dbReference>
<dbReference type="GO" id="GO:0000155">
    <property type="term" value="F:phosphorelay sensor kinase activity"/>
    <property type="evidence" value="ECO:0007669"/>
    <property type="project" value="InterPro"/>
</dbReference>
<dbReference type="GO" id="GO:0071555">
    <property type="term" value="P:cell wall organization"/>
    <property type="evidence" value="ECO:0007669"/>
    <property type="project" value="InterPro"/>
</dbReference>
<dbReference type="CDD" id="cd16957">
    <property type="entry name" value="HATPase_LytS-like"/>
    <property type="match status" value="1"/>
</dbReference>
<dbReference type="Gene3D" id="1.10.1760.20">
    <property type="match status" value="1"/>
</dbReference>
<dbReference type="Gene3D" id="3.30.450.40">
    <property type="match status" value="1"/>
</dbReference>
<dbReference type="Gene3D" id="3.30.565.10">
    <property type="entry name" value="Histidine kinase-like ATPase, C-terminal domain"/>
    <property type="match status" value="1"/>
</dbReference>
<dbReference type="InterPro" id="IPR050640">
    <property type="entry name" value="Bact_2-comp_sensor_kinase"/>
</dbReference>
<dbReference type="InterPro" id="IPR003018">
    <property type="entry name" value="GAF"/>
</dbReference>
<dbReference type="InterPro" id="IPR029016">
    <property type="entry name" value="GAF-like_dom_sf"/>
</dbReference>
<dbReference type="InterPro" id="IPR036890">
    <property type="entry name" value="HATPase_C_sf"/>
</dbReference>
<dbReference type="InterPro" id="IPR010559">
    <property type="entry name" value="Sig_transdc_His_kin_internal"/>
</dbReference>
<dbReference type="InterPro" id="IPR011620">
    <property type="entry name" value="Sig_transdc_His_kinase_LytS_TM"/>
</dbReference>
<dbReference type="PANTHER" id="PTHR34220">
    <property type="entry name" value="SENSOR HISTIDINE KINASE YPDA"/>
    <property type="match status" value="1"/>
</dbReference>
<dbReference type="PANTHER" id="PTHR34220:SF7">
    <property type="entry name" value="SENSOR HISTIDINE KINASE YPDA"/>
    <property type="match status" value="1"/>
</dbReference>
<dbReference type="Pfam" id="PF07694">
    <property type="entry name" value="5TM-5TMR_LYT"/>
    <property type="match status" value="1"/>
</dbReference>
<dbReference type="Pfam" id="PF02518">
    <property type="entry name" value="HATPase_c"/>
    <property type="match status" value="1"/>
</dbReference>
<dbReference type="Pfam" id="PF06580">
    <property type="entry name" value="His_kinase"/>
    <property type="match status" value="1"/>
</dbReference>
<dbReference type="SMART" id="SM00065">
    <property type="entry name" value="GAF"/>
    <property type="match status" value="1"/>
</dbReference>
<dbReference type="SMART" id="SM00387">
    <property type="entry name" value="HATPase_c"/>
    <property type="match status" value="1"/>
</dbReference>
<dbReference type="SUPFAM" id="SSF55874">
    <property type="entry name" value="ATPase domain of HSP90 chaperone/DNA topoisomerase II/histidine kinase"/>
    <property type="match status" value="1"/>
</dbReference>
<dbReference type="SUPFAM" id="SSF55781">
    <property type="entry name" value="GAF domain-like"/>
    <property type="match status" value="1"/>
</dbReference>
<keyword id="KW-0067">ATP-binding</keyword>
<keyword id="KW-1003">Cell membrane</keyword>
<keyword id="KW-0378">Hydrolase</keyword>
<keyword id="KW-0418">Kinase</keyword>
<keyword id="KW-0472">Membrane</keyword>
<keyword id="KW-0547">Nucleotide-binding</keyword>
<keyword id="KW-0597">Phosphoprotein</keyword>
<keyword id="KW-0808">Transferase</keyword>
<keyword id="KW-0812">Transmembrane</keyword>
<keyword id="KW-1133">Transmembrane helix</keyword>
<keyword id="KW-0902">Two-component regulatory system</keyword>
<comment type="function">
    <text evidence="2">Member of the two-component regulatory system LytR/LytS that regulates genes involved in autolysis, programmed cell death, biofilm formation and cell wall metabolism. Also participates in sensing and responding to host defense cationic antimicrobial peptides (HDPs). Functions as a sensor protein kinase which is autophosphorylated at a histidine residue and transfers its phosphate group to the conserved aspartic acid residue in the regulatory domain of LytR. In turn, LytR binds to the upstream promoter regions of target genes including lrgA and lrgB, to positively regulate their expression. Also possesses a phosphatase activity that dephosphorylates and thus inactivates LytR.</text>
</comment>
<comment type="catalytic activity">
    <reaction evidence="2">
        <text>ATP + protein L-histidine = ADP + protein N-phospho-L-histidine.</text>
        <dbReference type="EC" id="2.7.13.3"/>
    </reaction>
</comment>
<comment type="subcellular location">
    <subcellularLocation>
        <location evidence="1">Cell membrane</location>
        <topology evidence="1">Multi-pass membrane protein</topology>
    </subcellularLocation>
</comment>
<comment type="PTM">
    <text evidence="2">Autophosphorylated on His-390.</text>
</comment>
<comment type="sequence caution" evidence="4">
    <conflict type="erroneous initiation">
        <sequence resource="EMBL-CDS" id="ABD21266"/>
    </conflict>
</comment>
<evidence type="ECO:0000250" key="1"/>
<evidence type="ECO:0000250" key="2">
    <source>
        <dbReference type="UniProtKB" id="Q53705"/>
    </source>
</evidence>
<evidence type="ECO:0000255" key="3"/>
<evidence type="ECO:0000305" key="4"/>
<gene>
    <name type="primary">lytS</name>
    <name type="ordered locus">SAUSA300_0254</name>
</gene>
<organism>
    <name type="scientific">Staphylococcus aureus (strain USA300)</name>
    <dbReference type="NCBI Taxonomy" id="367830"/>
    <lineage>
        <taxon>Bacteria</taxon>
        <taxon>Bacillati</taxon>
        <taxon>Bacillota</taxon>
        <taxon>Bacilli</taxon>
        <taxon>Bacillales</taxon>
        <taxon>Staphylococcaceae</taxon>
        <taxon>Staphylococcus</taxon>
    </lineage>
</organism>